<name>YL046_YEAST</name>
<organism>
    <name type="scientific">Saccharomyces cerevisiae (strain ATCC 204508 / S288c)</name>
    <name type="common">Baker's yeast</name>
    <dbReference type="NCBI Taxonomy" id="559292"/>
    <lineage>
        <taxon>Eukaryota</taxon>
        <taxon>Fungi</taxon>
        <taxon>Dikarya</taxon>
        <taxon>Ascomycota</taxon>
        <taxon>Saccharomycotina</taxon>
        <taxon>Saccharomycetes</taxon>
        <taxon>Saccharomycetales</taxon>
        <taxon>Saccharomycetaceae</taxon>
        <taxon>Saccharomyces</taxon>
    </lineage>
</organism>
<feature type="chain" id="PRO_0000247195" description="Uncharacterized membrane protein YLR046C">
    <location>
        <begin position="1"/>
        <end position="270"/>
    </location>
</feature>
<feature type="topological domain" description="Cytoplasmic" evidence="1">
    <location>
        <begin position="1"/>
        <end position="37"/>
    </location>
</feature>
<feature type="transmembrane region" description="Helical" evidence="1">
    <location>
        <begin position="38"/>
        <end position="58"/>
    </location>
</feature>
<feature type="topological domain" description="Extracellular" evidence="1">
    <location>
        <begin position="59"/>
        <end position="65"/>
    </location>
</feature>
<feature type="transmembrane region" description="Helical" evidence="1">
    <location>
        <begin position="66"/>
        <end position="86"/>
    </location>
</feature>
<feature type="topological domain" description="Cytoplasmic" evidence="1">
    <location>
        <begin position="87"/>
        <end position="93"/>
    </location>
</feature>
<feature type="transmembrane region" description="Helical" evidence="1">
    <location>
        <begin position="94"/>
        <end position="114"/>
    </location>
</feature>
<feature type="topological domain" description="Extracellular" evidence="1">
    <location>
        <begin position="115"/>
        <end position="140"/>
    </location>
</feature>
<feature type="transmembrane region" description="Helical" evidence="1">
    <location>
        <begin position="141"/>
        <end position="161"/>
    </location>
</feature>
<feature type="topological domain" description="Cytoplasmic" evidence="1">
    <location>
        <begin position="162"/>
        <end position="181"/>
    </location>
</feature>
<feature type="transmembrane region" description="Helical" evidence="1">
    <location>
        <begin position="182"/>
        <end position="202"/>
    </location>
</feature>
<feature type="topological domain" description="Extracellular" evidence="1">
    <location>
        <begin position="203"/>
        <end position="220"/>
    </location>
</feature>
<feature type="transmembrane region" description="Helical" evidence="1">
    <location>
        <begin position="221"/>
        <end position="241"/>
    </location>
</feature>
<feature type="topological domain" description="Cytoplasmic" evidence="1">
    <location>
        <begin position="242"/>
        <end position="270"/>
    </location>
</feature>
<protein>
    <recommendedName>
        <fullName>Uncharacterized membrane protein YLR046C</fullName>
    </recommendedName>
</protein>
<reference key="1">
    <citation type="journal article" date="1997" name="Nature">
        <title>The nucleotide sequence of Saccharomyces cerevisiae chromosome XII.</title>
        <authorList>
            <person name="Johnston M."/>
            <person name="Hillier L.W."/>
            <person name="Riles L."/>
            <person name="Albermann K."/>
            <person name="Andre B."/>
            <person name="Ansorge W."/>
            <person name="Benes V."/>
            <person name="Brueckner M."/>
            <person name="Delius H."/>
            <person name="Dubois E."/>
            <person name="Duesterhoeft A."/>
            <person name="Entian K.-D."/>
            <person name="Floeth M."/>
            <person name="Goffeau A."/>
            <person name="Hebling U."/>
            <person name="Heumann K."/>
            <person name="Heuss-Neitzel D."/>
            <person name="Hilbert H."/>
            <person name="Hilger F."/>
            <person name="Kleine K."/>
            <person name="Koetter P."/>
            <person name="Louis E.J."/>
            <person name="Messenguy F."/>
            <person name="Mewes H.-W."/>
            <person name="Miosga T."/>
            <person name="Moestl D."/>
            <person name="Mueller-Auer S."/>
            <person name="Nentwich U."/>
            <person name="Obermaier B."/>
            <person name="Piravandi E."/>
            <person name="Pohl T.M."/>
            <person name="Portetelle D."/>
            <person name="Purnelle B."/>
            <person name="Rechmann S."/>
            <person name="Rieger M."/>
            <person name="Rinke M."/>
            <person name="Rose M."/>
            <person name="Scharfe M."/>
            <person name="Scherens B."/>
            <person name="Scholler P."/>
            <person name="Schwager C."/>
            <person name="Schwarz S."/>
            <person name="Underwood A.P."/>
            <person name="Urrestarazu L.A."/>
            <person name="Vandenbol M."/>
            <person name="Verhasselt P."/>
            <person name="Vierendeels F."/>
            <person name="Voet M."/>
            <person name="Volckaert G."/>
            <person name="Voss H."/>
            <person name="Wambutt R."/>
            <person name="Wedler E."/>
            <person name="Wedler H."/>
            <person name="Zimmermann F.K."/>
            <person name="Zollner A."/>
            <person name="Hani J."/>
            <person name="Hoheisel J.D."/>
        </authorList>
    </citation>
    <scope>NUCLEOTIDE SEQUENCE [LARGE SCALE GENOMIC DNA]</scope>
    <source>
        <strain>ATCC 204508 / S288c</strain>
    </source>
</reference>
<reference key="2">
    <citation type="journal article" date="2014" name="G3 (Bethesda)">
        <title>The reference genome sequence of Saccharomyces cerevisiae: Then and now.</title>
        <authorList>
            <person name="Engel S.R."/>
            <person name="Dietrich F.S."/>
            <person name="Fisk D.G."/>
            <person name="Binkley G."/>
            <person name="Balakrishnan R."/>
            <person name="Costanzo M.C."/>
            <person name="Dwight S.S."/>
            <person name="Hitz B.C."/>
            <person name="Karra K."/>
            <person name="Nash R.S."/>
            <person name="Weng S."/>
            <person name="Wong E.D."/>
            <person name="Lloyd P."/>
            <person name="Skrzypek M.S."/>
            <person name="Miyasato S.R."/>
            <person name="Simison M."/>
            <person name="Cherry J.M."/>
        </authorList>
    </citation>
    <scope>GENOME REANNOTATION</scope>
    <source>
        <strain>ATCC 204508 / S288c</strain>
    </source>
</reference>
<reference key="3">
    <citation type="journal article" date="2007" name="Genome Res.">
        <title>Approaching a complete repository of sequence-verified protein-encoding clones for Saccharomyces cerevisiae.</title>
        <authorList>
            <person name="Hu Y."/>
            <person name="Rolfs A."/>
            <person name="Bhullar B."/>
            <person name="Murthy T.V.S."/>
            <person name="Zhu C."/>
            <person name="Berger M.F."/>
            <person name="Camargo A.A."/>
            <person name="Kelley F."/>
            <person name="McCarron S."/>
            <person name="Jepson D."/>
            <person name="Richardson A."/>
            <person name="Raphael J."/>
            <person name="Moreira D."/>
            <person name="Taycher E."/>
            <person name="Zuo D."/>
            <person name="Mohr S."/>
            <person name="Kane M.F."/>
            <person name="Williamson J."/>
            <person name="Simpson A.J.G."/>
            <person name="Bulyk M.L."/>
            <person name="Harlow E."/>
            <person name="Marsischky G."/>
            <person name="Kolodner R.D."/>
            <person name="LaBaer J."/>
        </authorList>
    </citation>
    <scope>NUCLEOTIDE SEQUENCE [GENOMIC DNA]</scope>
    <source>
        <strain>ATCC 204508 / S288c</strain>
    </source>
</reference>
<reference key="4">
    <citation type="journal article" date="2003" name="J. Biol. Chem.">
        <title>Topology models for 37 Saccharomyces cerevisiae membrane proteins based on C-terminal reporter fusions and predictions.</title>
        <authorList>
            <person name="Kim H."/>
            <person name="Melen K."/>
            <person name="von Heijne G."/>
        </authorList>
    </citation>
    <scope>TOPOLOGY</scope>
</reference>
<reference key="5">
    <citation type="journal article" date="2006" name="Proc. Natl. Acad. Sci. U.S.A.">
        <title>A global topology map of the Saccharomyces cerevisiae membrane proteome.</title>
        <authorList>
            <person name="Kim H."/>
            <person name="Melen K."/>
            <person name="Oesterberg M."/>
            <person name="von Heijne G."/>
        </authorList>
    </citation>
    <scope>TOPOLOGY [LARGE SCALE ANALYSIS]</scope>
    <source>
        <strain>ATCC 208353 / W303-1A</strain>
    </source>
</reference>
<comment type="subcellular location">
    <subcellularLocation>
        <location>Membrane</location>
        <topology>Multi-pass membrane protein</topology>
    </subcellularLocation>
</comment>
<comment type="similarity">
    <text evidence="2">Belongs to the lipid-translocating exporter (LTE) (TC 9.A.26.1) family.</text>
</comment>
<proteinExistence type="evidence at protein level"/>
<evidence type="ECO:0000255" key="1"/>
<evidence type="ECO:0000305" key="2"/>
<accession>Q12253</accession>
<accession>D6VY48</accession>
<gene>
    <name type="ordered locus">YLR046C</name>
    <name type="ORF">L2111</name>
</gene>
<sequence length="270" mass="31054">MATHTSKRRIHRWENNELSEENSTIIYFPARGLMWTHFPFVLGICLEFVGYVLKIVFINSPSISTFIAQSVLLLIAPSLYALSIFMLFSKMARLILMEAYMLIPAKFSTVSFVVADMIGRVLQAVGGGLLSSWNSRNTGRILIIVGLFIQIFCYTFLTFSQLFLHYKMKATPSKIVRDSNEWFQYNFILLAGILLVNGRTIVRVVQFLMGLQSYIGQHEWCLYVFDTVLMFLLPLIFLATFRARNLFKLQDKSVNIQLNKLLDKESVSED</sequence>
<keyword id="KW-0472">Membrane</keyword>
<keyword id="KW-1185">Reference proteome</keyword>
<keyword id="KW-0812">Transmembrane</keyword>
<keyword id="KW-1133">Transmembrane helix</keyword>
<dbReference type="EMBL" id="X94607">
    <property type="protein sequence ID" value="CAA64293.1"/>
    <property type="molecule type" value="Genomic_DNA"/>
</dbReference>
<dbReference type="EMBL" id="Z73218">
    <property type="protein sequence ID" value="CAA97576.1"/>
    <property type="molecule type" value="Genomic_DNA"/>
</dbReference>
<dbReference type="EMBL" id="AY558204">
    <property type="protein sequence ID" value="AAS56530.1"/>
    <property type="molecule type" value="Genomic_DNA"/>
</dbReference>
<dbReference type="EMBL" id="BK006945">
    <property type="protein sequence ID" value="DAA09364.1"/>
    <property type="molecule type" value="Genomic_DNA"/>
</dbReference>
<dbReference type="PIR" id="S61620">
    <property type="entry name" value="S61620"/>
</dbReference>
<dbReference type="RefSeq" id="NP_013147.1">
    <property type="nucleotide sequence ID" value="NM_001181933.1"/>
</dbReference>
<dbReference type="BioGRID" id="31321">
    <property type="interactions" value="51"/>
</dbReference>
<dbReference type="DIP" id="DIP-1936N"/>
<dbReference type="FunCoup" id="Q12253">
    <property type="interactions" value="37"/>
</dbReference>
<dbReference type="IntAct" id="Q12253">
    <property type="interactions" value="1"/>
</dbReference>
<dbReference type="MINT" id="Q12253"/>
<dbReference type="STRING" id="4932.YLR046C"/>
<dbReference type="PaxDb" id="4932-YLR046C"/>
<dbReference type="EnsemblFungi" id="YLR046C_mRNA">
    <property type="protein sequence ID" value="YLR046C"/>
    <property type="gene ID" value="YLR046C"/>
</dbReference>
<dbReference type="GeneID" id="850735"/>
<dbReference type="KEGG" id="sce:YLR046C"/>
<dbReference type="AGR" id="SGD:S000004036"/>
<dbReference type="SGD" id="S000004036">
    <property type="gene designation" value="YLR046C"/>
</dbReference>
<dbReference type="VEuPathDB" id="FungiDB:YLR046C"/>
<dbReference type="eggNOG" id="ENOG502QURG">
    <property type="taxonomic scope" value="Eukaryota"/>
</dbReference>
<dbReference type="GeneTree" id="ENSGT00940000176387"/>
<dbReference type="HOGENOM" id="CLU_033465_1_0_1"/>
<dbReference type="InParanoid" id="Q12253"/>
<dbReference type="OMA" id="RIHRWEN"/>
<dbReference type="OrthoDB" id="3358017at2759"/>
<dbReference type="BioCyc" id="YEAST:G3O-32202-MONOMER"/>
<dbReference type="BioGRID-ORCS" id="850735">
    <property type="hits" value="1 hit in 10 CRISPR screens"/>
</dbReference>
<dbReference type="PRO" id="PR:Q12253"/>
<dbReference type="Proteomes" id="UP000002311">
    <property type="component" value="Chromosome XII"/>
</dbReference>
<dbReference type="RNAct" id="Q12253">
    <property type="molecule type" value="protein"/>
</dbReference>
<dbReference type="GO" id="GO:0000324">
    <property type="term" value="C:fungal-type vacuole"/>
    <property type="evidence" value="ECO:0007005"/>
    <property type="project" value="SGD"/>
</dbReference>
<dbReference type="GO" id="GO:0016020">
    <property type="term" value="C:membrane"/>
    <property type="evidence" value="ECO:0007669"/>
    <property type="project" value="UniProtKB-SubCell"/>
</dbReference>
<dbReference type="InterPro" id="IPR007568">
    <property type="entry name" value="RTA1"/>
</dbReference>
<dbReference type="PANTHER" id="PTHR31465">
    <property type="entry name" value="PROTEIN RTA1-RELATED"/>
    <property type="match status" value="1"/>
</dbReference>
<dbReference type="PANTHER" id="PTHR31465:SF1">
    <property type="entry name" value="PROTEIN RTA1-RELATED"/>
    <property type="match status" value="1"/>
</dbReference>
<dbReference type="Pfam" id="PF04479">
    <property type="entry name" value="RTA1"/>
    <property type="match status" value="1"/>
</dbReference>